<evidence type="ECO:0000255" key="1">
    <source>
        <dbReference type="HAMAP-Rule" id="MF_00815"/>
    </source>
</evidence>
<comment type="function">
    <text evidence="1">Produces ATP from ADP in the presence of a proton gradient across the membrane. The gamma chain is believed to be important in regulating ATPase activity and the flow of protons through the CF(0) complex.</text>
</comment>
<comment type="subunit">
    <text evidence="1">F-type ATPases have 2 components, CF(1) - the catalytic core - and CF(0) - the membrane proton channel. CF(1) has five subunits: alpha(3), beta(3), gamma(1), delta(1), epsilon(1). CF(0) has three main subunits: a, b and c.</text>
</comment>
<comment type="subcellular location">
    <subcellularLocation>
        <location evidence="1">Cell inner membrane</location>
        <topology evidence="1">Peripheral membrane protein</topology>
    </subcellularLocation>
</comment>
<comment type="similarity">
    <text evidence="1">Belongs to the ATPase gamma chain family.</text>
</comment>
<organism>
    <name type="scientific">Burkholderia multivorans (strain ATCC 17616 / 249)</name>
    <dbReference type="NCBI Taxonomy" id="395019"/>
    <lineage>
        <taxon>Bacteria</taxon>
        <taxon>Pseudomonadati</taxon>
        <taxon>Pseudomonadota</taxon>
        <taxon>Betaproteobacteria</taxon>
        <taxon>Burkholderiales</taxon>
        <taxon>Burkholderiaceae</taxon>
        <taxon>Burkholderia</taxon>
        <taxon>Burkholderia cepacia complex</taxon>
    </lineage>
</organism>
<sequence>MAGMKEIRGKIKSVQNTRKITKAMEMVAASKMRRAQERMRAARPYADKVRAIAAHMSRANPEYRHPFMVANEGAKTAGIILVTTDKGLCGGLNTNVLRASVQKFKELEEKGQKVEATAIGGKGLGFLNRFGAKVLSQVVHLGDTPHLDKLIGAVKTQLDLYSEGKLSAVYLAYTRFINTMKQEAVIEQLLPLSSEHFEADDGTPATSWDYIYEPDAQAVVDELLVRYVEALVYQAVAENMASEQSARMVAMKAASDNAKTVISELQLVYNKSRQAAITKELSEIVGGAAAV</sequence>
<reference key="1">
    <citation type="submission" date="2007-10" db="EMBL/GenBank/DDBJ databases">
        <title>Complete sequence of chromosome 1 of Burkholderia multivorans ATCC 17616.</title>
        <authorList>
            <person name="Copeland A."/>
            <person name="Lucas S."/>
            <person name="Lapidus A."/>
            <person name="Barry K."/>
            <person name="Glavina del Rio T."/>
            <person name="Dalin E."/>
            <person name="Tice H."/>
            <person name="Pitluck S."/>
            <person name="Chain P."/>
            <person name="Malfatti S."/>
            <person name="Shin M."/>
            <person name="Vergez L."/>
            <person name="Schmutz J."/>
            <person name="Larimer F."/>
            <person name="Land M."/>
            <person name="Hauser L."/>
            <person name="Kyrpides N."/>
            <person name="Kim E."/>
            <person name="Tiedje J."/>
            <person name="Richardson P."/>
        </authorList>
    </citation>
    <scope>NUCLEOTIDE SEQUENCE [LARGE SCALE GENOMIC DNA]</scope>
    <source>
        <strain>ATCC 17616 / 249</strain>
    </source>
</reference>
<reference key="2">
    <citation type="submission" date="2007-04" db="EMBL/GenBank/DDBJ databases">
        <title>Complete genome sequence of Burkholderia multivorans ATCC 17616.</title>
        <authorList>
            <person name="Ohtsubo Y."/>
            <person name="Yamashita A."/>
            <person name="Kurokawa K."/>
            <person name="Takami H."/>
            <person name="Yuhara S."/>
            <person name="Nishiyama E."/>
            <person name="Endo R."/>
            <person name="Miyazaki R."/>
            <person name="Ono A."/>
            <person name="Yano K."/>
            <person name="Ito M."/>
            <person name="Sota M."/>
            <person name="Yuji N."/>
            <person name="Hattori M."/>
            <person name="Tsuda M."/>
        </authorList>
    </citation>
    <scope>NUCLEOTIDE SEQUENCE [LARGE SCALE GENOMIC DNA]</scope>
    <source>
        <strain>ATCC 17616 / 249</strain>
    </source>
</reference>
<keyword id="KW-0066">ATP synthesis</keyword>
<keyword id="KW-0997">Cell inner membrane</keyword>
<keyword id="KW-1003">Cell membrane</keyword>
<keyword id="KW-0139">CF(1)</keyword>
<keyword id="KW-0375">Hydrogen ion transport</keyword>
<keyword id="KW-0406">Ion transport</keyword>
<keyword id="KW-0472">Membrane</keyword>
<keyword id="KW-1185">Reference proteome</keyword>
<keyword id="KW-0813">Transport</keyword>
<gene>
    <name evidence="1" type="primary">atpG</name>
    <name type="ordered locus">Bmul_0105</name>
    <name type="ordered locus">BMULJ_03160</name>
</gene>
<feature type="chain" id="PRO_1000134119" description="ATP synthase gamma chain">
    <location>
        <begin position="1"/>
        <end position="291"/>
    </location>
</feature>
<dbReference type="EMBL" id="CP000868">
    <property type="protein sequence ID" value="ABX13800.1"/>
    <property type="molecule type" value="Genomic_DNA"/>
</dbReference>
<dbReference type="EMBL" id="AP009385">
    <property type="protein sequence ID" value="BAG45034.1"/>
    <property type="molecule type" value="Genomic_DNA"/>
</dbReference>
<dbReference type="RefSeq" id="WP_006401463.1">
    <property type="nucleotide sequence ID" value="NC_010804.1"/>
</dbReference>
<dbReference type="SMR" id="A9AJG3"/>
<dbReference type="STRING" id="395019.BMULJ_03160"/>
<dbReference type="GeneID" id="89568484"/>
<dbReference type="KEGG" id="bmj:BMULJ_03160"/>
<dbReference type="KEGG" id="bmu:Bmul_0105"/>
<dbReference type="eggNOG" id="COG0224">
    <property type="taxonomic scope" value="Bacteria"/>
</dbReference>
<dbReference type="HOGENOM" id="CLU_050669_0_1_4"/>
<dbReference type="Proteomes" id="UP000008815">
    <property type="component" value="Chromosome 1"/>
</dbReference>
<dbReference type="GO" id="GO:0005886">
    <property type="term" value="C:plasma membrane"/>
    <property type="evidence" value="ECO:0007669"/>
    <property type="project" value="UniProtKB-SubCell"/>
</dbReference>
<dbReference type="GO" id="GO:0045259">
    <property type="term" value="C:proton-transporting ATP synthase complex"/>
    <property type="evidence" value="ECO:0007669"/>
    <property type="project" value="UniProtKB-KW"/>
</dbReference>
<dbReference type="GO" id="GO:0005524">
    <property type="term" value="F:ATP binding"/>
    <property type="evidence" value="ECO:0007669"/>
    <property type="project" value="UniProtKB-UniRule"/>
</dbReference>
<dbReference type="GO" id="GO:0046933">
    <property type="term" value="F:proton-transporting ATP synthase activity, rotational mechanism"/>
    <property type="evidence" value="ECO:0007669"/>
    <property type="project" value="UniProtKB-UniRule"/>
</dbReference>
<dbReference type="GO" id="GO:0042777">
    <property type="term" value="P:proton motive force-driven plasma membrane ATP synthesis"/>
    <property type="evidence" value="ECO:0007669"/>
    <property type="project" value="UniProtKB-UniRule"/>
</dbReference>
<dbReference type="CDD" id="cd12151">
    <property type="entry name" value="F1-ATPase_gamma"/>
    <property type="match status" value="1"/>
</dbReference>
<dbReference type="FunFam" id="1.10.287.80:FF:000005">
    <property type="entry name" value="ATP synthase gamma chain"/>
    <property type="match status" value="1"/>
</dbReference>
<dbReference type="Gene3D" id="3.40.1380.10">
    <property type="match status" value="1"/>
</dbReference>
<dbReference type="Gene3D" id="1.10.287.80">
    <property type="entry name" value="ATP synthase, gamma subunit, helix hairpin domain"/>
    <property type="match status" value="1"/>
</dbReference>
<dbReference type="HAMAP" id="MF_00815">
    <property type="entry name" value="ATP_synth_gamma_bact"/>
    <property type="match status" value="1"/>
</dbReference>
<dbReference type="InterPro" id="IPR035968">
    <property type="entry name" value="ATP_synth_F1_ATPase_gsu"/>
</dbReference>
<dbReference type="InterPro" id="IPR000131">
    <property type="entry name" value="ATP_synth_F1_gsu"/>
</dbReference>
<dbReference type="InterPro" id="IPR023632">
    <property type="entry name" value="ATP_synth_F1_gsu_CS"/>
</dbReference>
<dbReference type="NCBIfam" id="TIGR01146">
    <property type="entry name" value="ATPsyn_F1gamma"/>
    <property type="match status" value="1"/>
</dbReference>
<dbReference type="NCBIfam" id="NF004144">
    <property type="entry name" value="PRK05621.1-1"/>
    <property type="match status" value="1"/>
</dbReference>
<dbReference type="PANTHER" id="PTHR11693">
    <property type="entry name" value="ATP SYNTHASE GAMMA CHAIN"/>
    <property type="match status" value="1"/>
</dbReference>
<dbReference type="PANTHER" id="PTHR11693:SF22">
    <property type="entry name" value="ATP SYNTHASE SUBUNIT GAMMA, MITOCHONDRIAL"/>
    <property type="match status" value="1"/>
</dbReference>
<dbReference type="Pfam" id="PF00231">
    <property type="entry name" value="ATP-synt"/>
    <property type="match status" value="1"/>
</dbReference>
<dbReference type="PRINTS" id="PR00126">
    <property type="entry name" value="ATPASEGAMMA"/>
</dbReference>
<dbReference type="SUPFAM" id="SSF52943">
    <property type="entry name" value="ATP synthase (F1-ATPase), gamma subunit"/>
    <property type="match status" value="1"/>
</dbReference>
<dbReference type="PROSITE" id="PS00153">
    <property type="entry name" value="ATPASE_GAMMA"/>
    <property type="match status" value="1"/>
</dbReference>
<proteinExistence type="inferred from homology"/>
<name>ATPG_BURM1</name>
<protein>
    <recommendedName>
        <fullName evidence="1">ATP synthase gamma chain</fullName>
    </recommendedName>
    <alternativeName>
        <fullName evidence="1">ATP synthase F1 sector gamma subunit</fullName>
    </alternativeName>
    <alternativeName>
        <fullName evidence="1">F-ATPase gamma subunit</fullName>
    </alternativeName>
</protein>
<accession>A9AJG3</accession>